<organism>
    <name type="scientific">Chlorobium phaeobacteroides (strain BS1)</name>
    <dbReference type="NCBI Taxonomy" id="331678"/>
    <lineage>
        <taxon>Bacteria</taxon>
        <taxon>Pseudomonadati</taxon>
        <taxon>Chlorobiota</taxon>
        <taxon>Chlorobiia</taxon>
        <taxon>Chlorobiales</taxon>
        <taxon>Chlorobiaceae</taxon>
        <taxon>Chlorobium/Pelodictyon group</taxon>
        <taxon>Chlorobium</taxon>
    </lineage>
</organism>
<comment type="function">
    <text evidence="1">Involved in the maturation of [NiFe] hydrogenases. Required for nickel insertion into the metal center of the hydrogenase.</text>
</comment>
<comment type="similarity">
    <text evidence="1">Belongs to the HypA/HybF family.</text>
</comment>
<sequence>MHEMSIAISIIDAVAAKAEAEHADTVTIVELEVGKVAGVEVESLKFCFSAAAKNTVAEGAELAVCEVEPVGECEACGQRFPVAFHVATCTSCGSFKTNIVSGRELLIKSITIE</sequence>
<keyword id="KW-0479">Metal-binding</keyword>
<keyword id="KW-0533">Nickel</keyword>
<keyword id="KW-0862">Zinc</keyword>
<evidence type="ECO:0000255" key="1">
    <source>
        <dbReference type="HAMAP-Rule" id="MF_00213"/>
    </source>
</evidence>
<name>HYPA_CHLPB</name>
<feature type="chain" id="PRO_1000099889" description="Hydrogenase maturation factor HypA">
    <location>
        <begin position="1"/>
        <end position="113"/>
    </location>
</feature>
<feature type="binding site" evidence="1">
    <location>
        <position position="2"/>
    </location>
    <ligand>
        <name>Ni(2+)</name>
        <dbReference type="ChEBI" id="CHEBI:49786"/>
    </ligand>
</feature>
<feature type="binding site" evidence="1">
    <location>
        <position position="73"/>
    </location>
    <ligand>
        <name>Zn(2+)</name>
        <dbReference type="ChEBI" id="CHEBI:29105"/>
    </ligand>
</feature>
<feature type="binding site" evidence="1">
    <location>
        <position position="76"/>
    </location>
    <ligand>
        <name>Zn(2+)</name>
        <dbReference type="ChEBI" id="CHEBI:29105"/>
    </ligand>
</feature>
<feature type="binding site" evidence="1">
    <location>
        <position position="89"/>
    </location>
    <ligand>
        <name>Zn(2+)</name>
        <dbReference type="ChEBI" id="CHEBI:29105"/>
    </ligand>
</feature>
<feature type="binding site" evidence="1">
    <location>
        <position position="92"/>
    </location>
    <ligand>
        <name>Zn(2+)</name>
        <dbReference type="ChEBI" id="CHEBI:29105"/>
    </ligand>
</feature>
<dbReference type="EMBL" id="CP001101">
    <property type="protein sequence ID" value="ACE04684.1"/>
    <property type="molecule type" value="Genomic_DNA"/>
</dbReference>
<dbReference type="SMR" id="B3EL96"/>
<dbReference type="STRING" id="331678.Cphamn1_1766"/>
<dbReference type="KEGG" id="cpb:Cphamn1_1766"/>
<dbReference type="eggNOG" id="COG0375">
    <property type="taxonomic scope" value="Bacteria"/>
</dbReference>
<dbReference type="HOGENOM" id="CLU_126929_4_1_10"/>
<dbReference type="OrthoDB" id="9800361at2"/>
<dbReference type="GO" id="GO:0016151">
    <property type="term" value="F:nickel cation binding"/>
    <property type="evidence" value="ECO:0007669"/>
    <property type="project" value="UniProtKB-UniRule"/>
</dbReference>
<dbReference type="GO" id="GO:0008270">
    <property type="term" value="F:zinc ion binding"/>
    <property type="evidence" value="ECO:0007669"/>
    <property type="project" value="UniProtKB-UniRule"/>
</dbReference>
<dbReference type="GO" id="GO:0051604">
    <property type="term" value="P:protein maturation"/>
    <property type="evidence" value="ECO:0007669"/>
    <property type="project" value="InterPro"/>
</dbReference>
<dbReference type="GO" id="GO:0036211">
    <property type="term" value="P:protein modification process"/>
    <property type="evidence" value="ECO:0007669"/>
    <property type="project" value="UniProtKB-UniRule"/>
</dbReference>
<dbReference type="Gene3D" id="3.30.2320.80">
    <property type="match status" value="1"/>
</dbReference>
<dbReference type="HAMAP" id="MF_00213">
    <property type="entry name" value="HypA_HybF"/>
    <property type="match status" value="1"/>
</dbReference>
<dbReference type="InterPro" id="IPR020538">
    <property type="entry name" value="Hydgase_Ni_incorp_HypA/HybF_CS"/>
</dbReference>
<dbReference type="InterPro" id="IPR000688">
    <property type="entry name" value="HypA/HybF"/>
</dbReference>
<dbReference type="NCBIfam" id="TIGR00100">
    <property type="entry name" value="hypA"/>
    <property type="match status" value="1"/>
</dbReference>
<dbReference type="PANTHER" id="PTHR34535">
    <property type="entry name" value="HYDROGENASE MATURATION FACTOR HYPA"/>
    <property type="match status" value="1"/>
</dbReference>
<dbReference type="PANTHER" id="PTHR34535:SF3">
    <property type="entry name" value="HYDROGENASE MATURATION FACTOR HYPA"/>
    <property type="match status" value="1"/>
</dbReference>
<dbReference type="Pfam" id="PF01155">
    <property type="entry name" value="HypA"/>
    <property type="match status" value="1"/>
</dbReference>
<dbReference type="PIRSF" id="PIRSF004761">
    <property type="entry name" value="Hydrgn_mat_HypA"/>
    <property type="match status" value="1"/>
</dbReference>
<dbReference type="PROSITE" id="PS01249">
    <property type="entry name" value="HYPA"/>
    <property type="match status" value="1"/>
</dbReference>
<accession>B3EL96</accession>
<proteinExistence type="inferred from homology"/>
<gene>
    <name evidence="1" type="primary">hypA</name>
    <name type="ordered locus">Cphamn1_1766</name>
</gene>
<reference key="1">
    <citation type="submission" date="2008-06" db="EMBL/GenBank/DDBJ databases">
        <title>Complete sequence of Chlorobium phaeobacteroides BS1.</title>
        <authorList>
            <consortium name="US DOE Joint Genome Institute"/>
            <person name="Lucas S."/>
            <person name="Copeland A."/>
            <person name="Lapidus A."/>
            <person name="Glavina del Rio T."/>
            <person name="Dalin E."/>
            <person name="Tice H."/>
            <person name="Bruce D."/>
            <person name="Goodwin L."/>
            <person name="Pitluck S."/>
            <person name="Schmutz J."/>
            <person name="Larimer F."/>
            <person name="Land M."/>
            <person name="Hauser L."/>
            <person name="Kyrpides N."/>
            <person name="Ovchinnikova G."/>
            <person name="Li T."/>
            <person name="Liu Z."/>
            <person name="Zhao F."/>
            <person name="Overmann J."/>
            <person name="Bryant D.A."/>
            <person name="Richardson P."/>
        </authorList>
    </citation>
    <scope>NUCLEOTIDE SEQUENCE [LARGE SCALE GENOMIC DNA]</scope>
    <source>
        <strain>BS1</strain>
    </source>
</reference>
<protein>
    <recommendedName>
        <fullName evidence="1">Hydrogenase maturation factor HypA</fullName>
    </recommendedName>
</protein>